<feature type="chain" id="PRO_0000206516" description="UPF0259 membrane protein YciC">
    <location>
        <begin position="1"/>
        <end position="247"/>
    </location>
</feature>
<feature type="topological domain" description="Cytoplasmic" evidence="2">
    <location>
        <begin position="1"/>
        <end position="19"/>
    </location>
</feature>
<feature type="transmembrane region" description="Helical" evidence="2">
    <location>
        <begin position="20"/>
        <end position="40"/>
    </location>
</feature>
<feature type="topological domain" description="Periplasmic" evidence="2">
    <location>
        <begin position="41"/>
        <end position="86"/>
    </location>
</feature>
<feature type="transmembrane region" description="Helical" evidence="2">
    <location>
        <begin position="87"/>
        <end position="107"/>
    </location>
</feature>
<feature type="topological domain" description="Cytoplasmic" evidence="2">
    <location>
        <begin position="108"/>
        <end position="117"/>
    </location>
</feature>
<feature type="transmembrane region" description="Helical" evidence="2">
    <location>
        <begin position="118"/>
        <end position="140"/>
    </location>
</feature>
<feature type="topological domain" description="Periplasmic" evidence="2">
    <location>
        <begin position="141"/>
        <end position="151"/>
    </location>
</feature>
<feature type="transmembrane region" description="Helical" evidence="2">
    <location>
        <begin position="152"/>
        <end position="172"/>
    </location>
</feature>
<feature type="topological domain" description="Cytoplasmic" evidence="2">
    <location>
        <begin position="173"/>
        <end position="186"/>
    </location>
</feature>
<feature type="transmembrane region" description="Helical" evidence="2">
    <location>
        <begin position="187"/>
        <end position="209"/>
    </location>
</feature>
<feature type="topological domain" description="Periplasmic" evidence="2">
    <location>
        <begin position="210"/>
        <end position="224"/>
    </location>
</feature>
<feature type="transmembrane region" description="Helical" evidence="2">
    <location>
        <begin position="225"/>
        <end position="245"/>
    </location>
</feature>
<feature type="topological domain" description="Cytoplasmic" evidence="2">
    <location>
        <begin position="246"/>
        <end position="247"/>
    </location>
</feature>
<name>YCIC_ECO57</name>
<dbReference type="EMBL" id="AE005174">
    <property type="protein sequence ID" value="AAG56110.1"/>
    <property type="molecule type" value="Genomic_DNA"/>
</dbReference>
<dbReference type="EMBL" id="BA000007">
    <property type="protein sequence ID" value="BAB35178.1"/>
    <property type="molecule type" value="Genomic_DNA"/>
</dbReference>
<dbReference type="PIR" id="B85706">
    <property type="entry name" value="B85706"/>
</dbReference>
<dbReference type="PIR" id="C90848">
    <property type="entry name" value="C90848"/>
</dbReference>
<dbReference type="RefSeq" id="NP_309782.1">
    <property type="nucleotide sequence ID" value="NC_002695.1"/>
</dbReference>
<dbReference type="RefSeq" id="WP_000028544.1">
    <property type="nucleotide sequence ID" value="NZ_VOAI01000031.1"/>
</dbReference>
<dbReference type="STRING" id="155864.Z2033"/>
<dbReference type="GeneID" id="913096"/>
<dbReference type="KEGG" id="ece:Z2033"/>
<dbReference type="KEGG" id="ecs:ECs_1755"/>
<dbReference type="PATRIC" id="fig|386585.9.peg.1857"/>
<dbReference type="eggNOG" id="ENOG502Z96Y">
    <property type="taxonomic scope" value="Bacteria"/>
</dbReference>
<dbReference type="HOGENOM" id="CLU_073287_0_0_6"/>
<dbReference type="OMA" id="PGLWLMV"/>
<dbReference type="Proteomes" id="UP000000558">
    <property type="component" value="Chromosome"/>
</dbReference>
<dbReference type="Proteomes" id="UP000002519">
    <property type="component" value="Chromosome"/>
</dbReference>
<dbReference type="GO" id="GO:0005886">
    <property type="term" value="C:plasma membrane"/>
    <property type="evidence" value="ECO:0007669"/>
    <property type="project" value="UniProtKB-SubCell"/>
</dbReference>
<dbReference type="HAMAP" id="MF_01067">
    <property type="entry name" value="UPF0259"/>
    <property type="match status" value="1"/>
</dbReference>
<dbReference type="InterPro" id="IPR009627">
    <property type="entry name" value="UPF0259"/>
</dbReference>
<dbReference type="NCBIfam" id="NF002774">
    <property type="entry name" value="PRK02868.1"/>
    <property type="match status" value="1"/>
</dbReference>
<dbReference type="Pfam" id="PF06790">
    <property type="entry name" value="UPF0259"/>
    <property type="match status" value="1"/>
</dbReference>
<proteinExistence type="inferred from homology"/>
<gene>
    <name type="primary">yciC</name>
    <name type="ordered locus">Z2033</name>
    <name type="ordered locus">ECs1755</name>
</gene>
<protein>
    <recommendedName>
        <fullName>UPF0259 membrane protein YciC</fullName>
    </recommendedName>
</protein>
<keyword id="KW-0997">Cell inner membrane</keyword>
<keyword id="KW-1003">Cell membrane</keyword>
<keyword id="KW-0472">Membrane</keyword>
<keyword id="KW-1185">Reference proteome</keyword>
<keyword id="KW-0812">Transmembrane</keyword>
<keyword id="KW-1133">Transmembrane helix</keyword>
<reference key="1">
    <citation type="journal article" date="2001" name="Nature">
        <title>Genome sequence of enterohaemorrhagic Escherichia coli O157:H7.</title>
        <authorList>
            <person name="Perna N.T."/>
            <person name="Plunkett G. III"/>
            <person name="Burland V."/>
            <person name="Mau B."/>
            <person name="Glasner J.D."/>
            <person name="Rose D.J."/>
            <person name="Mayhew G.F."/>
            <person name="Evans P.S."/>
            <person name="Gregor J."/>
            <person name="Kirkpatrick H.A."/>
            <person name="Posfai G."/>
            <person name="Hackett J."/>
            <person name="Klink S."/>
            <person name="Boutin A."/>
            <person name="Shao Y."/>
            <person name="Miller L."/>
            <person name="Grotbeck E.J."/>
            <person name="Davis N.W."/>
            <person name="Lim A."/>
            <person name="Dimalanta E.T."/>
            <person name="Potamousis K."/>
            <person name="Apodaca J."/>
            <person name="Anantharaman T.S."/>
            <person name="Lin J."/>
            <person name="Yen G."/>
            <person name="Schwartz D.C."/>
            <person name="Welch R.A."/>
            <person name="Blattner F.R."/>
        </authorList>
    </citation>
    <scope>NUCLEOTIDE SEQUENCE [LARGE SCALE GENOMIC DNA]</scope>
    <source>
        <strain>O157:H7 / EDL933 / ATCC 700927 / EHEC</strain>
    </source>
</reference>
<reference key="2">
    <citation type="journal article" date="2001" name="DNA Res.">
        <title>Complete genome sequence of enterohemorrhagic Escherichia coli O157:H7 and genomic comparison with a laboratory strain K-12.</title>
        <authorList>
            <person name="Hayashi T."/>
            <person name="Makino K."/>
            <person name="Ohnishi M."/>
            <person name="Kurokawa K."/>
            <person name="Ishii K."/>
            <person name="Yokoyama K."/>
            <person name="Han C.-G."/>
            <person name="Ohtsubo E."/>
            <person name="Nakayama K."/>
            <person name="Murata T."/>
            <person name="Tanaka M."/>
            <person name="Tobe T."/>
            <person name="Iida T."/>
            <person name="Takami H."/>
            <person name="Honda T."/>
            <person name="Sasakawa C."/>
            <person name="Ogasawara N."/>
            <person name="Yasunaga T."/>
            <person name="Kuhara S."/>
            <person name="Shiba T."/>
            <person name="Hattori M."/>
            <person name="Shinagawa H."/>
        </authorList>
    </citation>
    <scope>NUCLEOTIDE SEQUENCE [LARGE SCALE GENOMIC DNA]</scope>
    <source>
        <strain>O157:H7 / Sakai / RIMD 0509952 / EHEC</strain>
    </source>
</reference>
<sequence length="247" mass="26401">MSITAQSVYRDTGNFFRNQFMTILLVSLLCAFITVVLGHVFSPSDAQLAQLNDGVPVSGSSGLFDLVQNMSPEQQQILLQASAASTFSGLIGNAILAGGVILIIQLVSAGQRVSALRAIGASAPILPKLFILIFLTTLLVQIGIMLVVVPGIIMAILLALAPVMLVQDKMGVFASIRSSMRLTWANMRLVAPAVLSWLLAKTLLLLFASSFAALTPEIGAVLANTLSNLISAILLIYLFRLYMLIRQ</sequence>
<evidence type="ECO:0000250" key="1"/>
<evidence type="ECO:0000255" key="2"/>
<evidence type="ECO:0000305" key="3"/>
<organism>
    <name type="scientific">Escherichia coli O157:H7</name>
    <dbReference type="NCBI Taxonomy" id="83334"/>
    <lineage>
        <taxon>Bacteria</taxon>
        <taxon>Pseudomonadati</taxon>
        <taxon>Pseudomonadota</taxon>
        <taxon>Gammaproteobacteria</taxon>
        <taxon>Enterobacterales</taxon>
        <taxon>Enterobacteriaceae</taxon>
        <taxon>Escherichia</taxon>
    </lineage>
</organism>
<comment type="subcellular location">
    <subcellularLocation>
        <location evidence="1">Cell inner membrane</location>
        <topology evidence="1">Multi-pass membrane protein</topology>
    </subcellularLocation>
</comment>
<comment type="similarity">
    <text evidence="3">Belongs to the UPF0259 family.</text>
</comment>
<accession>Q8XCB7</accession>